<name>FUT6_PONPY</name>
<keyword id="KW-0325">Glycoprotein</keyword>
<keyword id="KW-0328">Glycosyltransferase</keyword>
<keyword id="KW-0333">Golgi apparatus</keyword>
<keyword id="KW-0443">Lipid metabolism</keyword>
<keyword id="KW-0472">Membrane</keyword>
<keyword id="KW-0964">Secreted</keyword>
<keyword id="KW-0735">Signal-anchor</keyword>
<keyword id="KW-0808">Transferase</keyword>
<keyword id="KW-0812">Transmembrane</keyword>
<keyword id="KW-1133">Transmembrane helix</keyword>
<reference key="1">
    <citation type="journal article" date="2001" name="Genetics">
        <title>Contrasting patterns of polymorphisms at the ABO-secretor gene (FUT2) and plasma alpha(1,3)fucosyltransferase gene (FUT6) in human populations.</title>
        <authorList>
            <person name="Koda Y."/>
            <person name="Tachida H."/>
            <person name="Pang H."/>
            <person name="Liu Y."/>
            <person name="Soejima M."/>
            <person name="Ghaderi A.A."/>
            <person name="Takenaka O."/>
            <person name="Kimura H."/>
        </authorList>
    </citation>
    <scope>NUCLEOTIDE SEQUENCE [GENOMIC DNA]</scope>
</reference>
<gene>
    <name evidence="1" type="primary">FUT6</name>
</gene>
<sequence length="359" mass="41848">MDPLGPAKTQWSWRCCLTALLFQLLVAVCFFSYLRVSRDDPTVYPNGSPFPDSTGTPAHSIPLILLWTWPFNKPIALPRCSEMVPGTADCNITADRKVYPQADAVIVHHREVMYNPSAQLPRSPRRQGQRWIWFNLESPSHCWHLKAMDGYFNLTMSYRSDSDIFTPYGWLEPWSGQPAHPPLNLSAKTELVAWAVSNWRPNSARVRYYQSLQAHLKVDVYGRSHKPLPQGTMMETLSRYKFYLAFENSVHPDYITEKLWRNALEAWAVPVVLGPSRSNYERFLPPDAFIHVDDFQSPKDLAQYLQELDKDHARYLSYFRWRETLQPRSCSWALDFCKACWKLQEESRYQTRSIAAWFT</sequence>
<comment type="function">
    <text evidence="1">Catalyzes the transfer of L-fucose, from a guanosine diphosphate-beta-L-fucose, to the N-acetyl glucosamine (GlcNAc) of a distal alpha2,3 sialylated lactosamine unit of a glycoprotein- or glycolipid-linked sialopolylactosamines chain or of a distal or internal lactosamine unit of a neutral glycoprotein- or glycolipid-linked polylactosamines chain through an alpha-1,3 glycosidic linkage and participates in surface expression of the sialyl Lewis X (sLe(x)), Lewis X (Le(x)) and non sialylated VIM2 determinants. Moreover transfers fucose to H-type 2 (Fucalpha1-2Galbeta1-4GlcNAc) chain acceptor substrates and participates in difucosylated sialyl Lewis x determinants. Also fucosylates a polylactosamine substrate having a 6 sulfate modification at the GlcNAc moiety and gives rise to sialyl and non-sialyl 6-sulfo lewis X. Does not have activity towards type 1 ((Galbeta1-3GlcNAc)) and H-type 1 chain (Fucalpha1-2Galbeta1-3GlcNAc) acceptors substrates.</text>
</comment>
<comment type="catalytic activity">
    <reaction evidence="1">
        <text>a beta-D-galactosyl-(1-&gt;4)-N-acetyl-beta-D-glucosaminyl derivative + GDP-beta-L-fucose = a beta-D-galactosyl-(1-&gt;4)-[alpha-L-fucosyl-(1-&gt;3)]-N-acetyl-beta-D-glucosaminyl derivative + GDP + H(+)</text>
        <dbReference type="Rhea" id="RHEA:14257"/>
        <dbReference type="ChEBI" id="CHEBI:15378"/>
        <dbReference type="ChEBI" id="CHEBI:57273"/>
        <dbReference type="ChEBI" id="CHEBI:58189"/>
        <dbReference type="ChEBI" id="CHEBI:133507"/>
        <dbReference type="ChEBI" id="CHEBI:137941"/>
        <dbReference type="EC" id="2.4.1.152"/>
    </reaction>
    <physiologicalReaction direction="left-to-right" evidence="1">
        <dbReference type="Rhea" id="RHEA:14258"/>
    </physiologicalReaction>
</comment>
<comment type="catalytic activity">
    <reaction evidence="1">
        <text>an N-acetyl-alpha-neuraminyl-(2-&gt;3)-beta-D-galactosyl-(1-&gt;4)-N-acetyl-beta-D-glucosaminyl derivative + GDP-beta-L-fucose = an alpha-Neu5Ac-(2-&gt;3)-beta-D-Gal-(1-&gt;4)-[alpha-L-Fuc-(1-&gt;3)]-beta-D-GlcNAc derivative + GDP + H(+)</text>
        <dbReference type="Rhea" id="RHEA:56076"/>
        <dbReference type="ChEBI" id="CHEBI:15378"/>
        <dbReference type="ChEBI" id="CHEBI:57273"/>
        <dbReference type="ChEBI" id="CHEBI:58189"/>
        <dbReference type="ChEBI" id="CHEBI:136545"/>
        <dbReference type="ChEBI" id="CHEBI:139509"/>
    </reaction>
    <physiologicalReaction direction="left-to-right" evidence="1">
        <dbReference type="Rhea" id="RHEA:56077"/>
    </physiologicalReaction>
</comment>
<comment type="catalytic activity">
    <reaction evidence="1">
        <text>an alpha-Neu5Ac-(2-&gt;3)-beta-D-Gal-(1-&gt;4)-beta-D-GlcNAc-(1-&gt;3)-beta-D-Gal-(1-&gt;4)-[alpha-L-Fuc-(1-&gt;3)]-beta-D-GlcNAc derivative + GDP-beta-L-fucose = an alpha-Neu5Ac-(2-&gt;3)-beta-D-Gal-(1-&gt;4)-[alpha-L-Fuc-(1-&gt;3)]-beta-D-GlcNAc-(1-&gt;3)-beta-D-Gal-(1-&gt;4)-[alpha-L-Fuc-(1-&gt;3)]-beta-D-GlcNAc derivative + GDP + H(+)</text>
        <dbReference type="Rhea" id="RHEA:52864"/>
        <dbReference type="ChEBI" id="CHEBI:15378"/>
        <dbReference type="ChEBI" id="CHEBI:57273"/>
        <dbReference type="ChEBI" id="CHEBI:58189"/>
        <dbReference type="ChEBI" id="CHEBI:145342"/>
        <dbReference type="ChEBI" id="CHEBI:145343"/>
    </reaction>
    <physiologicalReaction direction="left-to-right" evidence="1">
        <dbReference type="Rhea" id="RHEA:52865"/>
    </physiologicalReaction>
</comment>
<comment type="catalytic activity">
    <reaction evidence="1">
        <text>a neolactoside nLc6Cer + GDP-beta-L-fucose = beta-D-Gal-(1-&gt;4)-[alpha-L-Fuc-(1-&gt;3)]-beta-D-GlcNAc-(1-&gt;3)-beta-D-Gal-(1-&gt;4)-beta-D-GlcNAc-(1-&gt;3)-beta-D-Gal-(1-&gt;4)-beta-D-Glc-(1&lt;-&gt;1')-Cer + GDP + H(+)</text>
        <dbReference type="Rhea" id="RHEA:48368"/>
        <dbReference type="ChEBI" id="CHEBI:15378"/>
        <dbReference type="ChEBI" id="CHEBI:57273"/>
        <dbReference type="ChEBI" id="CHEBI:58189"/>
        <dbReference type="ChEBI" id="CHEBI:90357"/>
        <dbReference type="ChEBI" id="CHEBI:90360"/>
    </reaction>
    <physiologicalReaction direction="left-to-right" evidence="1">
        <dbReference type="Rhea" id="RHEA:48369"/>
    </physiologicalReaction>
</comment>
<comment type="catalytic activity">
    <reaction evidence="1">
        <text>a neolactoside nLc6Cer + GDP-beta-L-fucose = beta-D-galactosyl-(1-&gt;4)-N-acetyl-beta-D-glucosaminyl-(1-&gt;3)-beta-D-galactosyl-(1-&gt;4)-[alpha-L-fucosyl-(1-&gt;3)]-N-acetyl-beta-D-glucosaminyl-(1-&gt;3)-beta-D-galactosyl-(1-&gt;4)-beta-D-glucosyl-(1&lt;-&gt;1')-ceramide + GDP + H(+)</text>
        <dbReference type="Rhea" id="RHEA:48364"/>
        <dbReference type="ChEBI" id="CHEBI:15378"/>
        <dbReference type="ChEBI" id="CHEBI:57273"/>
        <dbReference type="ChEBI" id="CHEBI:58189"/>
        <dbReference type="ChEBI" id="CHEBI:90357"/>
        <dbReference type="ChEBI" id="CHEBI:90358"/>
    </reaction>
    <physiologicalReaction direction="left-to-right" evidence="1">
        <dbReference type="Rhea" id="RHEA:48365"/>
    </physiologicalReaction>
</comment>
<comment type="catalytic activity">
    <reaction evidence="1">
        <text>a neolactoside VI(3)-alpha-NeuNAc-nLc6Cer + GDP-beta-L-fucose = a neolactoside VI(3)-alpha-NeuAc,V(3)-alphaFuc-nLc6Cer + GDP + H(+)</text>
        <dbReference type="Rhea" id="RHEA:48356"/>
        <dbReference type="ChEBI" id="CHEBI:15378"/>
        <dbReference type="ChEBI" id="CHEBI:57273"/>
        <dbReference type="ChEBI" id="CHEBI:58189"/>
        <dbReference type="ChEBI" id="CHEBI:90336"/>
        <dbReference type="ChEBI" id="CHEBI:90339"/>
    </reaction>
    <physiologicalReaction direction="left-to-right" evidence="1">
        <dbReference type="Rhea" id="RHEA:48357"/>
    </physiologicalReaction>
</comment>
<comment type="catalytic activity">
    <reaction evidence="1">
        <text>beta-D-galactosyl-(1-&gt;4)-N-acetyl-D-glucosamine + GDP-beta-L-fucose = beta-D-galactosyl-(1-&gt;4)-[alpha-L-fucosyl-(1-&gt;3)]-N-acetyl-D-glucosamine + GDP + H(+)</text>
        <dbReference type="Rhea" id="RHEA:62824"/>
        <dbReference type="ChEBI" id="CHEBI:15378"/>
        <dbReference type="ChEBI" id="CHEBI:57273"/>
        <dbReference type="ChEBI" id="CHEBI:58189"/>
        <dbReference type="ChEBI" id="CHEBI:60152"/>
        <dbReference type="ChEBI" id="CHEBI:62287"/>
    </reaction>
    <physiologicalReaction direction="left-to-right" evidence="1">
        <dbReference type="Rhea" id="RHEA:62825"/>
    </physiologicalReaction>
</comment>
<comment type="catalytic activity">
    <reaction evidence="1">
        <text>N-acetyl-alpha-neuraminosyl-(2-&gt;3)-beta-D-galactosyl-(1-&gt;4)-N-acetyl-beta-D-glucosamine + GDP-beta-L-fucose = N-acetyl-alpha-neuraminosyl-(2-&gt;3)-beta-D-galactosyl-(1-&gt;4)-[alpha-L-fucosyl-(1-&gt;3)]-N-acetyl-beta-D-glucosamine + GDP + H(+)</text>
        <dbReference type="Rhea" id="RHEA:62836"/>
        <dbReference type="ChEBI" id="CHEBI:15378"/>
        <dbReference type="ChEBI" id="CHEBI:57273"/>
        <dbReference type="ChEBI" id="CHEBI:58189"/>
        <dbReference type="ChEBI" id="CHEBI:145937"/>
        <dbReference type="ChEBI" id="CHEBI:145938"/>
    </reaction>
    <physiologicalReaction direction="left-to-right" evidence="1">
        <dbReference type="Rhea" id="RHEA:62837"/>
    </physiologicalReaction>
</comment>
<comment type="catalytic activity">
    <reaction evidence="1">
        <text>lactose + GDP-beta-L-fucose = beta-D-galactosyl-(1-&gt;4)-[alpha-L-fucosyl-(1-&gt;3)]-D-glucose + GDP + H(+)</text>
        <dbReference type="Rhea" id="RHEA:62888"/>
        <dbReference type="ChEBI" id="CHEBI:15378"/>
        <dbReference type="ChEBI" id="CHEBI:17716"/>
        <dbReference type="ChEBI" id="CHEBI:57273"/>
        <dbReference type="ChEBI" id="CHEBI:58189"/>
        <dbReference type="ChEBI" id="CHEBI:90065"/>
    </reaction>
    <physiologicalReaction direction="left-to-right" evidence="1">
        <dbReference type="Rhea" id="RHEA:62889"/>
    </physiologicalReaction>
</comment>
<comment type="catalytic activity">
    <reaction evidence="1">
        <text>alpha-L-Fuc-(1-&gt;2)-beta-D-Gal-(1-&gt;4)-D-Glc + GDP-beta-L-fucose = alpha-L-Fuc-(1-&gt;2)-beta-D-Gal-(1-&gt;4)-[alpha-L-Fuc-(1-&gt;3)]-D-Glc + GDP + H(+)</text>
        <dbReference type="Rhea" id="RHEA:64016"/>
        <dbReference type="ChEBI" id="CHEBI:15378"/>
        <dbReference type="ChEBI" id="CHEBI:57273"/>
        <dbReference type="ChEBI" id="CHEBI:58189"/>
        <dbReference type="ChEBI" id="CHEBI:147155"/>
        <dbReference type="ChEBI" id="CHEBI:149659"/>
    </reaction>
    <physiologicalReaction direction="left-to-right" evidence="1">
        <dbReference type="Rhea" id="RHEA:64017"/>
    </physiologicalReaction>
</comment>
<comment type="catalytic activity">
    <reaction evidence="1">
        <text>a beta-D-galactosyl-(1-&gt;4)-N-acetyl-beta-D-6-sulfooxy-glucosaminyl derivative + GDP-beta-L-fucose = a beta-D-galactosyl-(1-&gt;4)-[alpha-L-fucosyl-(1-&gt;3)]-N-acetyl-beta-D-6-sulfooxy-glucosaminyl derivative + GDP + H(+)</text>
        <dbReference type="Rhea" id="RHEA:64032"/>
        <dbReference type="ChEBI" id="CHEBI:15378"/>
        <dbReference type="ChEBI" id="CHEBI:57273"/>
        <dbReference type="ChEBI" id="CHEBI:58189"/>
        <dbReference type="ChEBI" id="CHEBI:149663"/>
        <dbReference type="ChEBI" id="CHEBI:149664"/>
    </reaction>
</comment>
<comment type="pathway">
    <text evidence="1">Protein modification; protein glycosylation.</text>
</comment>
<comment type="subunit">
    <text evidence="1">Homodimer and monomer. Monomer (secreted form).</text>
</comment>
<comment type="subcellular location">
    <subcellularLocation>
        <location evidence="1">Golgi apparatus</location>
        <location evidence="1">Golgi stack membrane</location>
        <topology evidence="1">Single-pass type II membrane protein</topology>
    </subcellularLocation>
    <subcellularLocation>
        <location evidence="1">Golgi apparatus</location>
    </subcellularLocation>
    <subcellularLocation>
        <location evidence="1">Secreted</location>
    </subcellularLocation>
    <text evidence="1">Membrane-bound form in trans cisternae of Golgi.</text>
</comment>
<comment type="PTM">
    <text evidence="1">N-glycosylated.</text>
</comment>
<comment type="PTM">
    <text evidence="1">Proteolytic cleavage releases a secreted glycoform of 43 kDa.</text>
</comment>
<comment type="similarity">
    <text evidence="3">Belongs to the glycosyltransferase 10 family.</text>
</comment>
<organism>
    <name type="scientific">Pongo pygmaeus</name>
    <name type="common">Bornean orangutan</name>
    <dbReference type="NCBI Taxonomy" id="9600"/>
    <lineage>
        <taxon>Eukaryota</taxon>
        <taxon>Metazoa</taxon>
        <taxon>Chordata</taxon>
        <taxon>Craniata</taxon>
        <taxon>Vertebrata</taxon>
        <taxon>Euteleostomi</taxon>
        <taxon>Mammalia</taxon>
        <taxon>Eutheria</taxon>
        <taxon>Euarchontoglires</taxon>
        <taxon>Primates</taxon>
        <taxon>Haplorrhini</taxon>
        <taxon>Catarrhini</taxon>
        <taxon>Hominidae</taxon>
        <taxon>Pongo</taxon>
    </lineage>
</organism>
<dbReference type="EC" id="2.4.1.152" evidence="1"/>
<dbReference type="EMBL" id="AB051859">
    <property type="protein sequence ID" value="BAB18672.1"/>
    <property type="molecule type" value="Genomic_DNA"/>
</dbReference>
<dbReference type="SMR" id="Q9GKU6"/>
<dbReference type="CAZy" id="GT10">
    <property type="family name" value="Glycosyltransferase Family 10"/>
</dbReference>
<dbReference type="GlyCosmos" id="Q9GKU6">
    <property type="glycosylation" value="3 sites, No reported glycans"/>
</dbReference>
<dbReference type="UniPathway" id="UPA00378"/>
<dbReference type="GO" id="GO:0005576">
    <property type="term" value="C:extracellular region"/>
    <property type="evidence" value="ECO:0000250"/>
    <property type="project" value="UniProtKB"/>
</dbReference>
<dbReference type="GO" id="GO:0005794">
    <property type="term" value="C:Golgi apparatus"/>
    <property type="evidence" value="ECO:0000250"/>
    <property type="project" value="UniProtKB"/>
</dbReference>
<dbReference type="GO" id="GO:0032580">
    <property type="term" value="C:Golgi cisterna membrane"/>
    <property type="evidence" value="ECO:0007669"/>
    <property type="project" value="UniProtKB-SubCell"/>
</dbReference>
<dbReference type="GO" id="GO:0017083">
    <property type="term" value="F:4-galactosyl-N-acetylglucosaminide 3-alpha-L-fucosyltransferase activity"/>
    <property type="evidence" value="ECO:0000250"/>
    <property type="project" value="UniProtKB"/>
</dbReference>
<dbReference type="GO" id="GO:0006688">
    <property type="term" value="P:glycosphingolipid biosynthetic process"/>
    <property type="evidence" value="ECO:0000250"/>
    <property type="project" value="UniProtKB"/>
</dbReference>
<dbReference type="GO" id="GO:0036071">
    <property type="term" value="P:N-glycan fucosylation"/>
    <property type="evidence" value="ECO:0000250"/>
    <property type="project" value="UniProtKB"/>
</dbReference>
<dbReference type="GO" id="GO:0006487">
    <property type="term" value="P:protein N-linked glycosylation"/>
    <property type="evidence" value="ECO:0000250"/>
    <property type="project" value="UniProtKB"/>
</dbReference>
<dbReference type="GO" id="GO:0006493">
    <property type="term" value="P:protein O-linked glycosylation"/>
    <property type="evidence" value="ECO:0000250"/>
    <property type="project" value="UniProtKB"/>
</dbReference>
<dbReference type="FunFam" id="3.40.50.11660:FF:000001">
    <property type="entry name" value="alpha-(1,3)-fucosyltransferase 9"/>
    <property type="match status" value="1"/>
</dbReference>
<dbReference type="Gene3D" id="3.40.50.11660">
    <property type="entry name" value="Glycosyl transferase family 10, C-terminal domain"/>
    <property type="match status" value="1"/>
</dbReference>
<dbReference type="InterPro" id="IPR055270">
    <property type="entry name" value="Glyco_tran_10_C"/>
</dbReference>
<dbReference type="InterPro" id="IPR031481">
    <property type="entry name" value="Glyco_tran_10_N"/>
</dbReference>
<dbReference type="InterPro" id="IPR001503">
    <property type="entry name" value="Glyco_trans_10"/>
</dbReference>
<dbReference type="InterPro" id="IPR038577">
    <property type="entry name" value="GT10-like_C_sf"/>
</dbReference>
<dbReference type="PANTHER" id="PTHR11929:SF227">
    <property type="entry name" value="4-GALACTOSYL-N-ACETYLGLUCOSAMINIDE 3-ALPHA-L-FUCOSYLTRANSFERASE FUT6"/>
    <property type="match status" value="1"/>
</dbReference>
<dbReference type="PANTHER" id="PTHR11929">
    <property type="entry name" value="ALPHA- 1,3 -FUCOSYLTRANSFERASE"/>
    <property type="match status" value="1"/>
</dbReference>
<dbReference type="Pfam" id="PF17039">
    <property type="entry name" value="Glyco_tran_10_N"/>
    <property type="match status" value="1"/>
</dbReference>
<dbReference type="Pfam" id="PF00852">
    <property type="entry name" value="Glyco_transf_10"/>
    <property type="match status" value="1"/>
</dbReference>
<dbReference type="SUPFAM" id="SSF53756">
    <property type="entry name" value="UDP-Glycosyltransferase/glycogen phosphorylase"/>
    <property type="match status" value="1"/>
</dbReference>
<evidence type="ECO:0000250" key="1">
    <source>
        <dbReference type="UniProtKB" id="P51993"/>
    </source>
</evidence>
<evidence type="ECO:0000255" key="2"/>
<evidence type="ECO:0000305" key="3"/>
<protein>
    <recommendedName>
        <fullName evidence="1">4-galactosyl-N-acetylglucosaminide 3-alpha-L-fucosyltransferase FUT6</fullName>
        <ecNumber evidence="1">2.4.1.152</ecNumber>
    </recommendedName>
    <alternativeName>
        <fullName>Fucosyltransferase 6</fullName>
    </alternativeName>
    <alternativeName>
        <fullName>Fucosyltransferase VI</fullName>
        <shortName>Fuc-TVI</shortName>
        <shortName>FucT-VI</shortName>
    </alternativeName>
    <alternativeName>
        <fullName>Galactoside 3-L-fucosyltransferase</fullName>
    </alternativeName>
</protein>
<proteinExistence type="inferred from homology"/>
<feature type="chain" id="PRO_0000221112" description="4-galactosyl-N-acetylglucosaminide 3-alpha-L-fucosyltransferase FUT6">
    <location>
        <begin position="1"/>
        <end position="359"/>
    </location>
</feature>
<feature type="topological domain" description="Cytoplasmic" evidence="2">
    <location>
        <begin position="1"/>
        <end position="14"/>
    </location>
</feature>
<feature type="transmembrane region" description="Helical; Signal-anchor for type II membrane protein" evidence="2">
    <location>
        <begin position="15"/>
        <end position="34"/>
    </location>
</feature>
<feature type="topological domain" description="Lumenal" evidence="2">
    <location>
        <begin position="35"/>
        <end position="359"/>
    </location>
</feature>
<feature type="region of interest" description="determines site-specific fucosylation" evidence="1">
    <location>
        <begin position="73"/>
        <end position="112"/>
    </location>
</feature>
<feature type="glycosylation site" description="N-linked (GlcNAc...) asparagine" evidence="2">
    <location>
        <position position="91"/>
    </location>
</feature>
<feature type="glycosylation site" description="N-linked (GlcNAc...) asparagine" evidence="2">
    <location>
        <position position="153"/>
    </location>
</feature>
<feature type="glycosylation site" description="N-linked (GlcNAc...) asparagine" evidence="2">
    <location>
        <position position="184"/>
    </location>
</feature>
<accession>Q9GKU6</accession>